<reference key="1">
    <citation type="journal article" date="2007" name="Nat. Biotechnol.">
        <title>Genome sequence of the lignocellulose-bioconverting and xylose-fermenting yeast Pichia stipitis.</title>
        <authorList>
            <person name="Jeffries T.W."/>
            <person name="Grigoriev I.V."/>
            <person name="Grimwood J."/>
            <person name="Laplaza J.M."/>
            <person name="Aerts A."/>
            <person name="Salamov A."/>
            <person name="Schmutz J."/>
            <person name="Lindquist E."/>
            <person name="Dehal P."/>
            <person name="Shapiro H."/>
            <person name="Jin Y.-S."/>
            <person name="Passoth V."/>
            <person name="Richardson P.M."/>
        </authorList>
    </citation>
    <scope>NUCLEOTIDE SEQUENCE [LARGE SCALE GENOMIC DNA]</scope>
    <source>
        <strain>ATCC 58785 / CBS 6054 / NBRC 10063 / NRRL Y-11545</strain>
    </source>
</reference>
<name>HOG1_PICST</name>
<proteinExistence type="inferred from homology"/>
<keyword id="KW-0010">Activator</keyword>
<keyword id="KW-0067">ATP-binding</keyword>
<keyword id="KW-0963">Cytoplasm</keyword>
<keyword id="KW-0418">Kinase</keyword>
<keyword id="KW-0547">Nucleotide-binding</keyword>
<keyword id="KW-0539">Nucleus</keyword>
<keyword id="KW-0597">Phosphoprotein</keyword>
<keyword id="KW-1185">Reference proteome</keyword>
<keyword id="KW-0723">Serine/threonine-protein kinase</keyword>
<keyword id="KW-0804">Transcription</keyword>
<keyword id="KW-0805">Transcription regulation</keyword>
<keyword id="KW-0808">Transferase</keyword>
<gene>
    <name type="primary">HOG1</name>
    <name type="ORF">PICST_54431</name>
</gene>
<dbReference type="EC" id="2.7.11.24" evidence="2"/>
<dbReference type="EMBL" id="CP000496">
    <property type="protein sequence ID" value="ABN64819.2"/>
    <property type="molecule type" value="Genomic_DNA"/>
</dbReference>
<dbReference type="RefSeq" id="XP_001382848.2">
    <property type="nucleotide sequence ID" value="XM_001382811.1"/>
</dbReference>
<dbReference type="SMR" id="A3LN91"/>
<dbReference type="FunCoup" id="A3LN91">
    <property type="interactions" value="705"/>
</dbReference>
<dbReference type="STRING" id="322104.A3LN91"/>
<dbReference type="GeneID" id="4837018"/>
<dbReference type="KEGG" id="pic:PICST_54431"/>
<dbReference type="eggNOG" id="KOG0660">
    <property type="taxonomic scope" value="Eukaryota"/>
</dbReference>
<dbReference type="HOGENOM" id="CLU_000288_181_1_1"/>
<dbReference type="InParanoid" id="A3LN91"/>
<dbReference type="OMA" id="NRYTDLN"/>
<dbReference type="OrthoDB" id="192887at2759"/>
<dbReference type="Proteomes" id="UP000002258">
    <property type="component" value="Chromosome 2"/>
</dbReference>
<dbReference type="GO" id="GO:0000785">
    <property type="term" value="C:chromatin"/>
    <property type="evidence" value="ECO:0007669"/>
    <property type="project" value="EnsemblFungi"/>
</dbReference>
<dbReference type="GO" id="GO:0005758">
    <property type="term" value="C:mitochondrial intermembrane space"/>
    <property type="evidence" value="ECO:0007669"/>
    <property type="project" value="EnsemblFungi"/>
</dbReference>
<dbReference type="GO" id="GO:0005634">
    <property type="term" value="C:nucleus"/>
    <property type="evidence" value="ECO:0007669"/>
    <property type="project" value="UniProtKB-SubCell"/>
</dbReference>
<dbReference type="GO" id="GO:0005524">
    <property type="term" value="F:ATP binding"/>
    <property type="evidence" value="ECO:0007669"/>
    <property type="project" value="UniProtKB-KW"/>
</dbReference>
<dbReference type="GO" id="GO:0005516">
    <property type="term" value="F:calmodulin binding"/>
    <property type="evidence" value="ECO:0007669"/>
    <property type="project" value="EnsemblFungi"/>
</dbReference>
<dbReference type="GO" id="GO:0003682">
    <property type="term" value="F:chromatin binding"/>
    <property type="evidence" value="ECO:0007669"/>
    <property type="project" value="EnsemblFungi"/>
</dbReference>
<dbReference type="GO" id="GO:0004707">
    <property type="term" value="F:MAP kinase activity"/>
    <property type="evidence" value="ECO:0007669"/>
    <property type="project" value="UniProtKB-EC"/>
</dbReference>
<dbReference type="GO" id="GO:0106310">
    <property type="term" value="F:protein serine kinase activity"/>
    <property type="evidence" value="ECO:0007669"/>
    <property type="project" value="RHEA"/>
</dbReference>
<dbReference type="GO" id="GO:0008353">
    <property type="term" value="F:RNA polymerase II CTD heptapeptide repeat kinase activity"/>
    <property type="evidence" value="ECO:0007669"/>
    <property type="project" value="EnsemblFungi"/>
</dbReference>
<dbReference type="GO" id="GO:0071474">
    <property type="term" value="P:cellular hyperosmotic response"/>
    <property type="evidence" value="ECO:0007669"/>
    <property type="project" value="EnsemblFungi"/>
</dbReference>
<dbReference type="GO" id="GO:0034599">
    <property type="term" value="P:cellular response to oxidative stress"/>
    <property type="evidence" value="ECO:0007669"/>
    <property type="project" value="EnsemblFungi"/>
</dbReference>
<dbReference type="GO" id="GO:0030447">
    <property type="term" value="P:filamentous growth"/>
    <property type="evidence" value="ECO:0007669"/>
    <property type="project" value="UniProtKB-ARBA"/>
</dbReference>
<dbReference type="GO" id="GO:1990625">
    <property type="term" value="P:negative regulation of cytoplasmic translational initiation in response to stress"/>
    <property type="evidence" value="ECO:0007669"/>
    <property type="project" value="EnsemblFungi"/>
</dbReference>
<dbReference type="GO" id="GO:0001100">
    <property type="term" value="P:negative regulation of exit from mitosis"/>
    <property type="evidence" value="ECO:0007669"/>
    <property type="project" value="EnsemblFungi"/>
</dbReference>
<dbReference type="GO" id="GO:0010972">
    <property type="term" value="P:negative regulation of G2/M transition of mitotic cell cycle"/>
    <property type="evidence" value="ECO:0007669"/>
    <property type="project" value="EnsemblFungi"/>
</dbReference>
<dbReference type="GO" id="GO:0010515">
    <property type="term" value="P:negative regulation of induction of conjugation with cellular fusion"/>
    <property type="evidence" value="ECO:0007669"/>
    <property type="project" value="EnsemblFungi"/>
</dbReference>
<dbReference type="GO" id="GO:0007231">
    <property type="term" value="P:osmosensory signaling pathway"/>
    <property type="evidence" value="ECO:0007669"/>
    <property type="project" value="EnsemblFungi"/>
</dbReference>
<dbReference type="GO" id="GO:0038066">
    <property type="term" value="P:p38MAPK cascade"/>
    <property type="evidence" value="ECO:0007669"/>
    <property type="project" value="EnsemblFungi"/>
</dbReference>
<dbReference type="GO" id="GO:0010971">
    <property type="term" value="P:positive regulation of G2/M transition of mitotic cell cycle"/>
    <property type="evidence" value="ECO:0007669"/>
    <property type="project" value="EnsemblFungi"/>
</dbReference>
<dbReference type="GO" id="GO:0042307">
    <property type="term" value="P:positive regulation of protein import into nucleus"/>
    <property type="evidence" value="ECO:0007669"/>
    <property type="project" value="EnsemblFungi"/>
</dbReference>
<dbReference type="GO" id="GO:0045944">
    <property type="term" value="P:positive regulation of transcription by RNA polymerase II"/>
    <property type="evidence" value="ECO:0007669"/>
    <property type="project" value="EnsemblFungi"/>
</dbReference>
<dbReference type="GO" id="GO:1903715">
    <property type="term" value="P:regulation of aerobic respiration"/>
    <property type="evidence" value="ECO:0007669"/>
    <property type="project" value="EnsemblFungi"/>
</dbReference>
<dbReference type="GO" id="GO:0016241">
    <property type="term" value="P:regulation of macroautophagy"/>
    <property type="evidence" value="ECO:0007669"/>
    <property type="project" value="EnsemblFungi"/>
</dbReference>
<dbReference type="GO" id="GO:0051445">
    <property type="term" value="P:regulation of meiotic cell cycle"/>
    <property type="evidence" value="ECO:0007669"/>
    <property type="project" value="EnsemblFungi"/>
</dbReference>
<dbReference type="GO" id="GO:0033262">
    <property type="term" value="P:regulation of nuclear cell cycle DNA replication"/>
    <property type="evidence" value="ECO:0007669"/>
    <property type="project" value="EnsemblFungi"/>
</dbReference>
<dbReference type="GO" id="GO:0010520">
    <property type="term" value="P:regulation of reciprocal meiotic recombination"/>
    <property type="evidence" value="ECO:0007669"/>
    <property type="project" value="EnsemblFungi"/>
</dbReference>
<dbReference type="FunFam" id="1.10.510.10:FF:000049">
    <property type="entry name" value="Mitogen-activated protein kinase"/>
    <property type="match status" value="1"/>
</dbReference>
<dbReference type="FunFam" id="3.30.200.20:FF:000050">
    <property type="entry name" value="Mitogen-activated protein kinase"/>
    <property type="match status" value="1"/>
</dbReference>
<dbReference type="Gene3D" id="3.30.200.20">
    <property type="entry name" value="Phosphorylase Kinase, domain 1"/>
    <property type="match status" value="1"/>
</dbReference>
<dbReference type="Gene3D" id="1.10.510.10">
    <property type="entry name" value="Transferase(Phosphotransferase) domain 1"/>
    <property type="match status" value="1"/>
</dbReference>
<dbReference type="InterPro" id="IPR011009">
    <property type="entry name" value="Kinase-like_dom_sf"/>
</dbReference>
<dbReference type="InterPro" id="IPR050117">
    <property type="entry name" value="MAP_kinase"/>
</dbReference>
<dbReference type="InterPro" id="IPR003527">
    <property type="entry name" value="MAP_kinase_CS"/>
</dbReference>
<dbReference type="InterPro" id="IPR000719">
    <property type="entry name" value="Prot_kinase_dom"/>
</dbReference>
<dbReference type="InterPro" id="IPR017441">
    <property type="entry name" value="Protein_kinase_ATP_BS"/>
</dbReference>
<dbReference type="InterPro" id="IPR008271">
    <property type="entry name" value="Ser/Thr_kinase_AS"/>
</dbReference>
<dbReference type="PANTHER" id="PTHR24055">
    <property type="entry name" value="MITOGEN-ACTIVATED PROTEIN KINASE"/>
    <property type="match status" value="1"/>
</dbReference>
<dbReference type="Pfam" id="PF00069">
    <property type="entry name" value="Pkinase"/>
    <property type="match status" value="1"/>
</dbReference>
<dbReference type="SMART" id="SM00220">
    <property type="entry name" value="S_TKc"/>
    <property type="match status" value="1"/>
</dbReference>
<dbReference type="SUPFAM" id="SSF56112">
    <property type="entry name" value="Protein kinase-like (PK-like)"/>
    <property type="match status" value="1"/>
</dbReference>
<dbReference type="PROSITE" id="PS01351">
    <property type="entry name" value="MAPK"/>
    <property type="match status" value="1"/>
</dbReference>
<dbReference type="PROSITE" id="PS00107">
    <property type="entry name" value="PROTEIN_KINASE_ATP"/>
    <property type="match status" value="1"/>
</dbReference>
<dbReference type="PROSITE" id="PS50011">
    <property type="entry name" value="PROTEIN_KINASE_DOM"/>
    <property type="match status" value="1"/>
</dbReference>
<dbReference type="PROSITE" id="PS00108">
    <property type="entry name" value="PROTEIN_KINASE_ST"/>
    <property type="match status" value="1"/>
</dbReference>
<accession>A3LN91</accession>
<protein>
    <recommendedName>
        <fullName>Mitogen-activated protein kinase HOG1</fullName>
        <shortName>MAP kinase HOG1</shortName>
        <ecNumber evidence="2">2.7.11.24</ecNumber>
    </recommendedName>
</protein>
<comment type="function">
    <text evidence="4">Proline-directed serine/threonine-protein kinase involved in a signal transduction pathway that is activated by changes in the osmolarity of the extracellular environment. Controls osmotic regulation of transcription of target genes.</text>
</comment>
<comment type="catalytic activity">
    <reaction evidence="2">
        <text>L-seryl-[protein] + ATP = O-phospho-L-seryl-[protein] + ADP + H(+)</text>
        <dbReference type="Rhea" id="RHEA:17989"/>
        <dbReference type="Rhea" id="RHEA-COMP:9863"/>
        <dbReference type="Rhea" id="RHEA-COMP:11604"/>
        <dbReference type="ChEBI" id="CHEBI:15378"/>
        <dbReference type="ChEBI" id="CHEBI:29999"/>
        <dbReference type="ChEBI" id="CHEBI:30616"/>
        <dbReference type="ChEBI" id="CHEBI:83421"/>
        <dbReference type="ChEBI" id="CHEBI:456216"/>
        <dbReference type="EC" id="2.7.11.24"/>
    </reaction>
    <physiologicalReaction direction="left-to-right" evidence="2">
        <dbReference type="Rhea" id="RHEA:17990"/>
    </physiologicalReaction>
</comment>
<comment type="catalytic activity">
    <reaction evidence="2">
        <text>L-threonyl-[protein] + ATP = O-phospho-L-threonyl-[protein] + ADP + H(+)</text>
        <dbReference type="Rhea" id="RHEA:46608"/>
        <dbReference type="Rhea" id="RHEA-COMP:11060"/>
        <dbReference type="Rhea" id="RHEA-COMP:11605"/>
        <dbReference type="ChEBI" id="CHEBI:15378"/>
        <dbReference type="ChEBI" id="CHEBI:30013"/>
        <dbReference type="ChEBI" id="CHEBI:30616"/>
        <dbReference type="ChEBI" id="CHEBI:61977"/>
        <dbReference type="ChEBI" id="CHEBI:456216"/>
        <dbReference type="EC" id="2.7.11.24"/>
    </reaction>
    <physiologicalReaction direction="left-to-right" evidence="2">
        <dbReference type="Rhea" id="RHEA:46609"/>
    </physiologicalReaction>
</comment>
<comment type="cofactor">
    <cofactor evidence="3">
        <name>Mg(2+)</name>
        <dbReference type="ChEBI" id="CHEBI:18420"/>
    </cofactor>
</comment>
<comment type="activity regulation">
    <text evidence="1">Activated by tyrosine and threonine phosphorylation.</text>
</comment>
<comment type="subcellular location">
    <subcellularLocation>
        <location evidence="1">Cytoplasm</location>
    </subcellularLocation>
    <subcellularLocation>
        <location evidence="1">Nucleus</location>
    </subcellularLocation>
</comment>
<comment type="domain">
    <text>The TXY motif contains the threonine and tyrosine residues whose phosphorylation activates the MAP kinases.</text>
</comment>
<comment type="PTM">
    <text evidence="1">Dually phosphorylated on Thr-174 and Tyr-176, which activates the enzyme.</text>
</comment>
<comment type="similarity">
    <text evidence="5">Belongs to the protein kinase superfamily. Ser/Thr protein kinase family. MAP kinase subfamily. HOG1 sub-subfamily.</text>
</comment>
<sequence>MSSDGEFTRTQIFGTVFEITNRYTDLNPVGMGAFGLVCSAVDKLTGQNVAVKKIMKPFSTSVLAKRTYRELKLLKHLKHENLITLDDIFLSPLEDIYFVNELQGTDLHRLLTSRPLEKQFIQYFTYQILRGLKYIHSAGVIHRDLKPSNILINENCDLKICDFGLARIQDPQMTGYVSTRYYRAPEIMLTWQKYDTEVDLWSVGCILAEMIEGKPLFPGKDHVHQFSIITELLGSPPPDVIDTICSENTLRFVQSLPHRDPIPFNERFAQCTHVEPEAIDLLAKMLIFDPKKRISAASALTHPYMEPYHDPTDEPICETKFDWSFNDADLPVDTWRVMMYSEILDFHQIGGVGEEAGQSVTQEEIAHIQQDGIQAPQQPQEQQVE</sequence>
<feature type="chain" id="PRO_0000289700" description="Mitogen-activated protein kinase HOG1">
    <location>
        <begin position="1"/>
        <end position="385"/>
    </location>
</feature>
<feature type="domain" description="Protein kinase" evidence="5">
    <location>
        <begin position="23"/>
        <end position="305"/>
    </location>
</feature>
<feature type="short sequence motif" description="TXY" evidence="1">
    <location>
        <begin position="174"/>
        <end position="176"/>
    </location>
</feature>
<feature type="active site" description="Proton acceptor" evidence="5 6">
    <location>
        <position position="144"/>
    </location>
</feature>
<feature type="binding site" evidence="5">
    <location>
        <begin position="29"/>
        <end position="37"/>
    </location>
    <ligand>
        <name>ATP</name>
        <dbReference type="ChEBI" id="CHEBI:30616"/>
    </ligand>
</feature>
<feature type="binding site" evidence="5">
    <location>
        <position position="52"/>
    </location>
    <ligand>
        <name>ATP</name>
        <dbReference type="ChEBI" id="CHEBI:30616"/>
    </ligand>
</feature>
<feature type="modified residue" description="Phosphothreonine" evidence="1">
    <location>
        <position position="174"/>
    </location>
</feature>
<feature type="modified residue" description="Phosphotyrosine" evidence="1">
    <location>
        <position position="176"/>
    </location>
</feature>
<evidence type="ECO:0000250" key="1"/>
<evidence type="ECO:0000250" key="2">
    <source>
        <dbReference type="UniProtKB" id="P32485"/>
    </source>
</evidence>
<evidence type="ECO:0000250" key="3">
    <source>
        <dbReference type="UniProtKB" id="Q16539"/>
    </source>
</evidence>
<evidence type="ECO:0000250" key="4">
    <source>
        <dbReference type="UniProtKB" id="Q4WSF6"/>
    </source>
</evidence>
<evidence type="ECO:0000255" key="5">
    <source>
        <dbReference type="PROSITE-ProRule" id="PRU00159"/>
    </source>
</evidence>
<evidence type="ECO:0000255" key="6">
    <source>
        <dbReference type="PROSITE-ProRule" id="PRU10027"/>
    </source>
</evidence>
<organism>
    <name type="scientific">Scheffersomyces stipitis (strain ATCC 58785 / CBS 6054 / NBRC 10063 / NRRL Y-11545)</name>
    <name type="common">Yeast</name>
    <name type="synonym">Pichia stipitis</name>
    <dbReference type="NCBI Taxonomy" id="322104"/>
    <lineage>
        <taxon>Eukaryota</taxon>
        <taxon>Fungi</taxon>
        <taxon>Dikarya</taxon>
        <taxon>Ascomycota</taxon>
        <taxon>Saccharomycotina</taxon>
        <taxon>Pichiomycetes</taxon>
        <taxon>Debaryomycetaceae</taxon>
        <taxon>Scheffersomyces</taxon>
    </lineage>
</organism>